<dbReference type="EMBL" id="DQ347959">
    <property type="protein sequence ID" value="ABC56283.1"/>
    <property type="molecule type" value="Genomic_DNA"/>
</dbReference>
<dbReference type="EMBL" id="AM087200">
    <property type="protein sequence ID" value="CAJ32376.1"/>
    <property type="molecule type" value="Genomic_DNA"/>
</dbReference>
<dbReference type="RefSeq" id="AP_004911.1">
    <property type="nucleotide sequence ID" value="AC_000188.1"/>
</dbReference>
<dbReference type="RefSeq" id="YP_008563071.1">
    <property type="nucleotide sequence ID" value="NC_007898.3"/>
</dbReference>
<dbReference type="SMR" id="Q2MIB7"/>
<dbReference type="FunCoup" id="Q2MIB7">
    <property type="interactions" value="55"/>
</dbReference>
<dbReference type="STRING" id="4081.Q2MIB7"/>
<dbReference type="GeneID" id="3950386"/>
<dbReference type="KEGG" id="sly:3950386"/>
<dbReference type="InParanoid" id="Q2MIB7"/>
<dbReference type="OrthoDB" id="1673137at2759"/>
<dbReference type="Proteomes" id="UP000004994">
    <property type="component" value="Chloroplast"/>
</dbReference>
<dbReference type="GO" id="GO:0009535">
    <property type="term" value="C:chloroplast thylakoid membrane"/>
    <property type="evidence" value="ECO:0007669"/>
    <property type="project" value="UniProtKB-SubCell"/>
</dbReference>
<dbReference type="GO" id="GO:0009539">
    <property type="term" value="C:photosystem II reaction center"/>
    <property type="evidence" value="ECO:0007669"/>
    <property type="project" value="InterPro"/>
</dbReference>
<dbReference type="GO" id="GO:0015979">
    <property type="term" value="P:photosynthesis"/>
    <property type="evidence" value="ECO:0007669"/>
    <property type="project" value="UniProtKB-UniRule"/>
</dbReference>
<dbReference type="HAMAP" id="MF_00441">
    <property type="entry name" value="PSII_PsbK"/>
    <property type="match status" value="1"/>
</dbReference>
<dbReference type="InterPro" id="IPR003687">
    <property type="entry name" value="PSII_PsbK"/>
</dbReference>
<dbReference type="InterPro" id="IPR037270">
    <property type="entry name" value="PSII_PsbK_sf"/>
</dbReference>
<dbReference type="NCBIfam" id="NF002715">
    <property type="entry name" value="PRK02553.1"/>
    <property type="match status" value="1"/>
</dbReference>
<dbReference type="PANTHER" id="PTHR35325">
    <property type="match status" value="1"/>
</dbReference>
<dbReference type="PANTHER" id="PTHR35325:SF1">
    <property type="entry name" value="PHOTOSYSTEM II REACTION CENTER PROTEIN K"/>
    <property type="match status" value="1"/>
</dbReference>
<dbReference type="Pfam" id="PF02533">
    <property type="entry name" value="PsbK"/>
    <property type="match status" value="1"/>
</dbReference>
<dbReference type="SUPFAM" id="SSF161037">
    <property type="entry name" value="Photosystem II reaction center protein K, PsbK"/>
    <property type="match status" value="1"/>
</dbReference>
<organism>
    <name type="scientific">Solanum lycopersicum</name>
    <name type="common">Tomato</name>
    <name type="synonym">Lycopersicon esculentum</name>
    <dbReference type="NCBI Taxonomy" id="4081"/>
    <lineage>
        <taxon>Eukaryota</taxon>
        <taxon>Viridiplantae</taxon>
        <taxon>Streptophyta</taxon>
        <taxon>Embryophyta</taxon>
        <taxon>Tracheophyta</taxon>
        <taxon>Spermatophyta</taxon>
        <taxon>Magnoliopsida</taxon>
        <taxon>eudicotyledons</taxon>
        <taxon>Gunneridae</taxon>
        <taxon>Pentapetalae</taxon>
        <taxon>asterids</taxon>
        <taxon>lamiids</taxon>
        <taxon>Solanales</taxon>
        <taxon>Solanaceae</taxon>
        <taxon>Solanoideae</taxon>
        <taxon>Solaneae</taxon>
        <taxon>Solanum</taxon>
        <taxon>Solanum subgen. Lycopersicon</taxon>
    </lineage>
</organism>
<name>PSBK_SOLLC</name>
<evidence type="ECO:0000255" key="1">
    <source>
        <dbReference type="HAMAP-Rule" id="MF_00441"/>
    </source>
</evidence>
<gene>
    <name evidence="1" type="primary">psbK</name>
</gene>
<feature type="propeptide" id="PRO_0000276178" evidence="1">
    <location>
        <begin position="1"/>
        <end position="24"/>
    </location>
</feature>
<feature type="chain" id="PRO_0000276179" description="Photosystem II reaction center protein K" evidence="1">
    <location>
        <begin position="25"/>
        <end position="61"/>
    </location>
</feature>
<feature type="transmembrane region" description="Helical" evidence="1">
    <location>
        <begin position="36"/>
        <end position="56"/>
    </location>
</feature>
<sequence length="61" mass="6930">MLNTFSLIGICLNSTLYSSSFFFGKLPEAYAFLNPIVDIMPVIPLFFFLLAFVWQAAVSFR</sequence>
<comment type="function">
    <text evidence="1">One of the components of the core complex of photosystem II (PSII). PSII is a light-driven water:plastoquinone oxidoreductase that uses light energy to abstract electrons from H(2)O, generating O(2) and a proton gradient subsequently used for ATP formation. It consists of a core antenna complex that captures photons, and an electron transfer chain that converts photonic excitation into a charge separation.</text>
</comment>
<comment type="subunit">
    <text evidence="1">PSII is composed of 1 copy each of membrane proteins PsbA, PsbB, PsbC, PsbD, PsbE, PsbF, PsbH, PsbI, PsbJ, PsbK, PsbL, PsbM, PsbT, PsbX, PsbY, PsbZ, Psb30/Ycf12, at least 3 peripheral proteins of the oxygen-evolving complex and a large number of cofactors. It forms dimeric complexes.</text>
</comment>
<comment type="subcellular location">
    <subcellularLocation>
        <location evidence="1">Plastid</location>
        <location evidence="1">Chloroplast thylakoid membrane</location>
        <topology evidence="1">Single-pass membrane protein</topology>
    </subcellularLocation>
</comment>
<comment type="similarity">
    <text evidence="1">Belongs to the PsbK family.</text>
</comment>
<keyword id="KW-0150">Chloroplast</keyword>
<keyword id="KW-0472">Membrane</keyword>
<keyword id="KW-0602">Photosynthesis</keyword>
<keyword id="KW-0604">Photosystem II</keyword>
<keyword id="KW-0934">Plastid</keyword>
<keyword id="KW-0674">Reaction center</keyword>
<keyword id="KW-1185">Reference proteome</keyword>
<keyword id="KW-0793">Thylakoid</keyword>
<keyword id="KW-0812">Transmembrane</keyword>
<keyword id="KW-1133">Transmembrane helix</keyword>
<accession>Q2MIB7</accession>
<proteinExistence type="inferred from homology"/>
<reference key="1">
    <citation type="journal article" date="2006" name="Theor. Appl. Genet.">
        <title>Complete chloroplast genome sequences of Solanum bulbocastanum, Solanum lycopersicum and comparative analyses with other Solanaceae genomes.</title>
        <authorList>
            <person name="Daniell H."/>
            <person name="Lee S.-B."/>
            <person name="Grevich J."/>
            <person name="Saski C."/>
            <person name="Quesada-Vargas T."/>
            <person name="Guda C."/>
            <person name="Tomkins J."/>
            <person name="Jansen R.K."/>
        </authorList>
    </citation>
    <scope>NUCLEOTIDE SEQUENCE [LARGE SCALE GENOMIC DNA]</scope>
    <source>
        <strain>cv. LA3023</strain>
    </source>
</reference>
<reference key="2">
    <citation type="journal article" date="2006" name="J. Mol. Evol.">
        <title>Sequence of the tomato chloroplast DNA and evolutionary comparison of solanaceous plastid genomes.</title>
        <authorList>
            <person name="Kahlau S."/>
            <person name="Aspinall S."/>
            <person name="Gray J.C."/>
            <person name="Bock R."/>
        </authorList>
    </citation>
    <scope>NUCLEOTIDE SEQUENCE [LARGE SCALE GENOMIC DNA]</scope>
    <source>
        <strain>cv. IPA-6</strain>
    </source>
</reference>
<geneLocation type="chloroplast"/>
<protein>
    <recommendedName>
        <fullName evidence="1">Photosystem II reaction center protein K</fullName>
        <shortName evidence="1">PSII-K</shortName>
    </recommendedName>
</protein>